<feature type="chain" id="PRO_0000376793" description="N-acetyldiaminopimelate deacetylase">
    <location>
        <begin position="1"/>
        <end position="377"/>
    </location>
</feature>
<feature type="active site" evidence="1">
    <location>
        <position position="70"/>
    </location>
</feature>
<feature type="active site" description="Proton acceptor" evidence="1">
    <location>
        <position position="129"/>
    </location>
</feature>
<dbReference type="EC" id="3.5.1.47" evidence="1"/>
<dbReference type="EMBL" id="CP000419">
    <property type="protein sequence ID" value="ABJ66941.1"/>
    <property type="molecule type" value="Genomic_DNA"/>
</dbReference>
<dbReference type="RefSeq" id="WP_011681671.1">
    <property type="nucleotide sequence ID" value="NC_008532.1"/>
</dbReference>
<dbReference type="SMR" id="Q03IN1"/>
<dbReference type="KEGG" id="ste:STER_1813"/>
<dbReference type="HOGENOM" id="CLU_023257_0_1_9"/>
<dbReference type="UniPathway" id="UPA00034">
    <property type="reaction ID" value="UER00024"/>
</dbReference>
<dbReference type="GO" id="GO:0050118">
    <property type="term" value="F:N-acetyldiaminopimelate deacetylase activity"/>
    <property type="evidence" value="ECO:0007669"/>
    <property type="project" value="UniProtKB-UniRule"/>
</dbReference>
<dbReference type="GO" id="GO:0019877">
    <property type="term" value="P:diaminopimelate biosynthetic process"/>
    <property type="evidence" value="ECO:0007669"/>
    <property type="project" value="UniProtKB-UniRule"/>
</dbReference>
<dbReference type="GO" id="GO:0009089">
    <property type="term" value="P:lysine biosynthetic process via diaminopimelate"/>
    <property type="evidence" value="ECO:0007669"/>
    <property type="project" value="UniProtKB-UniRule"/>
</dbReference>
<dbReference type="CDD" id="cd05670">
    <property type="entry name" value="M20_Acy1_YkuR-like"/>
    <property type="match status" value="1"/>
</dbReference>
<dbReference type="FunFam" id="3.30.70.360:FF:000001">
    <property type="entry name" value="N-acetyldiaminopimelate deacetylase"/>
    <property type="match status" value="1"/>
</dbReference>
<dbReference type="Gene3D" id="3.30.70.360">
    <property type="match status" value="1"/>
</dbReference>
<dbReference type="Gene3D" id="3.40.630.10">
    <property type="entry name" value="Zn peptidases"/>
    <property type="match status" value="1"/>
</dbReference>
<dbReference type="HAMAP" id="MF_01692">
    <property type="entry name" value="DapEL"/>
    <property type="match status" value="1"/>
</dbReference>
<dbReference type="InterPro" id="IPR023905">
    <property type="entry name" value="AcetylDAP_deacetylase"/>
</dbReference>
<dbReference type="InterPro" id="IPR017439">
    <property type="entry name" value="Amidohydrolase"/>
</dbReference>
<dbReference type="InterPro" id="IPR036264">
    <property type="entry name" value="Bact_exopeptidase_dim_dom"/>
</dbReference>
<dbReference type="InterPro" id="IPR002933">
    <property type="entry name" value="Peptidase_M20"/>
</dbReference>
<dbReference type="InterPro" id="IPR011650">
    <property type="entry name" value="Peptidase_M20_dimer"/>
</dbReference>
<dbReference type="NCBIfam" id="TIGR01891">
    <property type="entry name" value="amidohydrolases"/>
    <property type="match status" value="1"/>
</dbReference>
<dbReference type="PANTHER" id="PTHR11014:SF98">
    <property type="entry name" value="N-ACETYLDIAMINOPIMELATE DEACETYLASE"/>
    <property type="match status" value="1"/>
</dbReference>
<dbReference type="PANTHER" id="PTHR11014">
    <property type="entry name" value="PEPTIDASE M20 FAMILY MEMBER"/>
    <property type="match status" value="1"/>
</dbReference>
<dbReference type="Pfam" id="PF07687">
    <property type="entry name" value="M20_dimer"/>
    <property type="match status" value="1"/>
</dbReference>
<dbReference type="Pfam" id="PF01546">
    <property type="entry name" value="Peptidase_M20"/>
    <property type="match status" value="1"/>
</dbReference>
<dbReference type="PIRSF" id="PIRSF005962">
    <property type="entry name" value="Pept_M20D_amidohydro"/>
    <property type="match status" value="1"/>
</dbReference>
<dbReference type="SUPFAM" id="SSF55031">
    <property type="entry name" value="Bacterial exopeptidase dimerisation domain"/>
    <property type="match status" value="1"/>
</dbReference>
<dbReference type="SUPFAM" id="SSF53187">
    <property type="entry name" value="Zn-dependent exopeptidases"/>
    <property type="match status" value="1"/>
</dbReference>
<evidence type="ECO:0000255" key="1">
    <source>
        <dbReference type="HAMAP-Rule" id="MF_01692"/>
    </source>
</evidence>
<keyword id="KW-0028">Amino-acid biosynthesis</keyword>
<keyword id="KW-0220">Diaminopimelate biosynthesis</keyword>
<keyword id="KW-0378">Hydrolase</keyword>
<keyword id="KW-0457">Lysine biosynthesis</keyword>
<reference key="1">
    <citation type="journal article" date="2006" name="Proc. Natl. Acad. Sci. U.S.A.">
        <title>Comparative genomics of the lactic acid bacteria.</title>
        <authorList>
            <person name="Makarova K.S."/>
            <person name="Slesarev A."/>
            <person name="Wolf Y.I."/>
            <person name="Sorokin A."/>
            <person name="Mirkin B."/>
            <person name="Koonin E.V."/>
            <person name="Pavlov A."/>
            <person name="Pavlova N."/>
            <person name="Karamychev V."/>
            <person name="Polouchine N."/>
            <person name="Shakhova V."/>
            <person name="Grigoriev I."/>
            <person name="Lou Y."/>
            <person name="Rohksar D."/>
            <person name="Lucas S."/>
            <person name="Huang K."/>
            <person name="Goodstein D.M."/>
            <person name="Hawkins T."/>
            <person name="Plengvidhya V."/>
            <person name="Welker D."/>
            <person name="Hughes J."/>
            <person name="Goh Y."/>
            <person name="Benson A."/>
            <person name="Baldwin K."/>
            <person name="Lee J.-H."/>
            <person name="Diaz-Muniz I."/>
            <person name="Dosti B."/>
            <person name="Smeianov V."/>
            <person name="Wechter W."/>
            <person name="Barabote R."/>
            <person name="Lorca G."/>
            <person name="Altermann E."/>
            <person name="Barrangou R."/>
            <person name="Ganesan B."/>
            <person name="Xie Y."/>
            <person name="Rawsthorne H."/>
            <person name="Tamir D."/>
            <person name="Parker C."/>
            <person name="Breidt F."/>
            <person name="Broadbent J.R."/>
            <person name="Hutkins R."/>
            <person name="O'Sullivan D."/>
            <person name="Steele J."/>
            <person name="Unlu G."/>
            <person name="Saier M.H. Jr."/>
            <person name="Klaenhammer T."/>
            <person name="Richardson P."/>
            <person name="Kozyavkin S."/>
            <person name="Weimer B.C."/>
            <person name="Mills D.A."/>
        </authorList>
    </citation>
    <scope>NUCLEOTIDE SEQUENCE [LARGE SCALE GENOMIC DNA]</scope>
    <source>
        <strain>ATCC BAA-491 / LMD-9</strain>
    </source>
</reference>
<proteinExistence type="inferred from homology"/>
<organism>
    <name type="scientific">Streptococcus thermophilus (strain ATCC BAA-491 / LMD-9)</name>
    <dbReference type="NCBI Taxonomy" id="322159"/>
    <lineage>
        <taxon>Bacteria</taxon>
        <taxon>Bacillati</taxon>
        <taxon>Bacillota</taxon>
        <taxon>Bacilli</taxon>
        <taxon>Lactobacillales</taxon>
        <taxon>Streptococcaceae</taxon>
        <taxon>Streptococcus</taxon>
    </lineage>
</organism>
<sequence>MTLDLIKIRRDLHQIPEIGLEEFKTQAYLLERIAEMTEGKDFVEQRTWRTGILVFLHGSAPEKTIGWRTDIDGLPIVEETGLDFKSIHEGRMHACGHDIHMTTALGLLDQMLQVQPKNNMLFLFQPAEENEAGGMLMYEDGAFGDWLPDEFYGLHVRPDFKVGDIATNTNTLFAGTCEVLVTFKGKGGHAAFPHEANDALVAASYFITQVQTIVSRNVDPIQGGVVTFGSFHAGTTNNVIAETAEVYGTIRTLTQEMSLLIQKRVRQIAEGVAASFGMEVDIMLKQGGYLPVENNPALAKELMAFFDASPMVNLIDCLPAMTGEDFGYLLSKVPGVMFWLGIDTPYALHHPKMSPNEEALAFAVSEIGKFLKYKAED</sequence>
<accession>Q03IN1</accession>
<name>DAPEL_STRTD</name>
<gene>
    <name type="ordered locus">STER_1813</name>
</gene>
<protein>
    <recommendedName>
        <fullName evidence="1">N-acetyldiaminopimelate deacetylase</fullName>
        <ecNumber evidence="1">3.5.1.47</ecNumber>
    </recommendedName>
</protein>
<comment type="function">
    <text evidence="1">Catalyzes the conversion of N-acetyl-diaminopimelate to diaminopimelate and acetate.</text>
</comment>
<comment type="catalytic activity">
    <reaction evidence="1">
        <text>N-acetyl-(2S,6S)-2,6-diaminopimelate + H2O = (2S,6S)-2,6-diaminopimelate + acetate</text>
        <dbReference type="Rhea" id="RHEA:20405"/>
        <dbReference type="ChEBI" id="CHEBI:15377"/>
        <dbReference type="ChEBI" id="CHEBI:30089"/>
        <dbReference type="ChEBI" id="CHEBI:57609"/>
        <dbReference type="ChEBI" id="CHEBI:58767"/>
        <dbReference type="EC" id="3.5.1.47"/>
    </reaction>
</comment>
<comment type="pathway">
    <text evidence="1">Amino-acid biosynthesis; L-lysine biosynthesis via DAP pathway; LL-2,6-diaminopimelate from (S)-tetrahydrodipicolinate (acetylase route): step 3/3.</text>
</comment>
<comment type="similarity">
    <text evidence="1">Belongs to the peptidase M20A family. N-acetyldiaminopimelate deacetylase subfamily.</text>
</comment>